<proteinExistence type="inferred from homology"/>
<protein>
    <recommendedName>
        <fullName evidence="1">D-tagatose-1,6-bisphosphate aldolase subunit GatY</fullName>
        <shortName evidence="1">TBPA</shortName>
        <shortName evidence="1">TagBP aldolase</shortName>
        <ecNumber evidence="1">4.1.2.40</ecNumber>
    </recommendedName>
    <alternativeName>
        <fullName evidence="1">D-tagatose-bisphosphate aldolase class II</fullName>
    </alternativeName>
    <alternativeName>
        <fullName evidence="1">Tagatose-bisphosphate aldolase</fullName>
    </alternativeName>
</protein>
<reference key="1">
    <citation type="submission" date="2008-02" db="EMBL/GenBank/DDBJ databases">
        <title>Complete sequence of Escherichia coli C str. ATCC 8739.</title>
        <authorList>
            <person name="Copeland A."/>
            <person name="Lucas S."/>
            <person name="Lapidus A."/>
            <person name="Glavina del Rio T."/>
            <person name="Dalin E."/>
            <person name="Tice H."/>
            <person name="Bruce D."/>
            <person name="Goodwin L."/>
            <person name="Pitluck S."/>
            <person name="Kiss H."/>
            <person name="Brettin T."/>
            <person name="Detter J.C."/>
            <person name="Han C."/>
            <person name="Kuske C.R."/>
            <person name="Schmutz J."/>
            <person name="Larimer F."/>
            <person name="Land M."/>
            <person name="Hauser L."/>
            <person name="Kyrpides N."/>
            <person name="Mikhailova N."/>
            <person name="Ingram L."/>
            <person name="Richardson P."/>
        </authorList>
    </citation>
    <scope>NUCLEOTIDE SEQUENCE [LARGE SCALE GENOMIC DNA]</scope>
    <source>
        <strain>ATCC 8739 / DSM 1576 / NBRC 3972 / NCIMB 8545 / WDCM 00012 / Crooks</strain>
    </source>
</reference>
<organism>
    <name type="scientific">Escherichia coli (strain ATCC 8739 / DSM 1576 / NBRC 3972 / NCIMB 8545 / WDCM 00012 / Crooks)</name>
    <dbReference type="NCBI Taxonomy" id="481805"/>
    <lineage>
        <taxon>Bacteria</taxon>
        <taxon>Pseudomonadati</taxon>
        <taxon>Pseudomonadota</taxon>
        <taxon>Gammaproteobacteria</taxon>
        <taxon>Enterobacterales</taxon>
        <taxon>Enterobacteriaceae</taxon>
        <taxon>Escherichia</taxon>
    </lineage>
</organism>
<evidence type="ECO:0000255" key="1">
    <source>
        <dbReference type="HAMAP-Rule" id="MF_01294"/>
    </source>
</evidence>
<sequence length="284" mass="30812">MYVVSTKQMLNNAQRGGYAVPAFNIHNLETMQVVVETAANLHAPVIIAGTPGTFTHAGTENLLALVSAMAKQYHHPLAIHLDHHTKFDDIAQKVRSGVRSVMIDASHLPFAQNISRVKEVVDFCHRFDVSVEAELGQLGGQEDDVQVNEADALYTNPAQAREFAEATGIDSLAVAIGTAHGMYASAPALDFSRLENIRQWVNLPLVLHGASGLSTKDIQQTIKLGICKINVATELKNAFSQALKNYLTEHPEATDPRDYLQSAKSAMRDVVSKVIADCGCEGRA</sequence>
<dbReference type="EC" id="4.1.2.40" evidence="1"/>
<dbReference type="EMBL" id="CP000946">
    <property type="protein sequence ID" value="ACA77210.1"/>
    <property type="molecule type" value="Genomic_DNA"/>
</dbReference>
<dbReference type="RefSeq" id="WP_001307281.1">
    <property type="nucleotide sequence ID" value="NZ_MTFT01000031.1"/>
</dbReference>
<dbReference type="SMR" id="B1IYY4"/>
<dbReference type="KEGG" id="ecl:EcolC_1551"/>
<dbReference type="HOGENOM" id="CLU_040088_0_1_6"/>
<dbReference type="UniPathway" id="UPA00704">
    <property type="reaction ID" value="UER00716"/>
</dbReference>
<dbReference type="GO" id="GO:0005829">
    <property type="term" value="C:cytosol"/>
    <property type="evidence" value="ECO:0007669"/>
    <property type="project" value="TreeGrafter"/>
</dbReference>
<dbReference type="GO" id="GO:0009025">
    <property type="term" value="F:tagatose-bisphosphate aldolase activity"/>
    <property type="evidence" value="ECO:0007669"/>
    <property type="project" value="UniProtKB-UniRule"/>
</dbReference>
<dbReference type="GO" id="GO:0008270">
    <property type="term" value="F:zinc ion binding"/>
    <property type="evidence" value="ECO:0007669"/>
    <property type="project" value="UniProtKB-UniRule"/>
</dbReference>
<dbReference type="GO" id="GO:2001059">
    <property type="term" value="P:D-tagatose 6-phosphate catabolic process"/>
    <property type="evidence" value="ECO:0007669"/>
    <property type="project" value="UniProtKB-UniRule"/>
</dbReference>
<dbReference type="GO" id="GO:0019404">
    <property type="term" value="P:galactitol catabolic process"/>
    <property type="evidence" value="ECO:0007669"/>
    <property type="project" value="InterPro"/>
</dbReference>
<dbReference type="CDD" id="cd00947">
    <property type="entry name" value="TBP_aldolase_IIB"/>
    <property type="match status" value="1"/>
</dbReference>
<dbReference type="FunFam" id="3.20.20.70:FF:000043">
    <property type="entry name" value="D-tagatose-1,6-bisphosphate aldolase subunit GatY"/>
    <property type="match status" value="1"/>
</dbReference>
<dbReference type="Gene3D" id="3.20.20.70">
    <property type="entry name" value="Aldolase class I"/>
    <property type="match status" value="1"/>
</dbReference>
<dbReference type="HAMAP" id="MF_01294">
    <property type="entry name" value="TagBP_aldolase_GatY"/>
    <property type="match status" value="1"/>
</dbReference>
<dbReference type="InterPro" id="IPR013785">
    <property type="entry name" value="Aldolase_TIM"/>
</dbReference>
<dbReference type="InterPro" id="IPR050246">
    <property type="entry name" value="Class_II_FBP_aldolase"/>
</dbReference>
<dbReference type="InterPro" id="IPR000771">
    <property type="entry name" value="FBA_II"/>
</dbReference>
<dbReference type="InterPro" id="IPR011288">
    <property type="entry name" value="TagBP_ald_KbaY/GatY"/>
</dbReference>
<dbReference type="InterPro" id="IPR023955">
    <property type="entry name" value="TagBP_aldolase_GatY"/>
</dbReference>
<dbReference type="NCBIfam" id="TIGR00167">
    <property type="entry name" value="cbbA"/>
    <property type="match status" value="1"/>
</dbReference>
<dbReference type="NCBIfam" id="NF006626">
    <property type="entry name" value="PRK09195.1"/>
    <property type="match status" value="1"/>
</dbReference>
<dbReference type="NCBIfam" id="NF009374">
    <property type="entry name" value="PRK12737.1"/>
    <property type="match status" value="1"/>
</dbReference>
<dbReference type="NCBIfam" id="TIGR01858">
    <property type="entry name" value="tag_bisphos_ald"/>
    <property type="match status" value="1"/>
</dbReference>
<dbReference type="PANTHER" id="PTHR30304">
    <property type="entry name" value="D-TAGATOSE-1,6-BISPHOSPHATE ALDOLASE"/>
    <property type="match status" value="1"/>
</dbReference>
<dbReference type="PANTHER" id="PTHR30304:SF0">
    <property type="entry name" value="D-TAGATOSE-1,6-BISPHOSPHATE ALDOLASE SUBUNIT GATY-RELATED"/>
    <property type="match status" value="1"/>
</dbReference>
<dbReference type="Pfam" id="PF01116">
    <property type="entry name" value="F_bP_aldolase"/>
    <property type="match status" value="1"/>
</dbReference>
<dbReference type="PIRSF" id="PIRSF001359">
    <property type="entry name" value="F_bP_aldolase_II"/>
    <property type="match status" value="1"/>
</dbReference>
<dbReference type="SUPFAM" id="SSF51569">
    <property type="entry name" value="Aldolase"/>
    <property type="match status" value="1"/>
</dbReference>
<dbReference type="PROSITE" id="PS00602">
    <property type="entry name" value="ALDOLASE_CLASS_II_1"/>
    <property type="match status" value="1"/>
</dbReference>
<dbReference type="PROSITE" id="PS00806">
    <property type="entry name" value="ALDOLASE_CLASS_II_2"/>
    <property type="match status" value="1"/>
</dbReference>
<comment type="function">
    <text evidence="1">Catalytic subunit of the tagatose-1,6-bisphosphate aldolase GatYZ, which catalyzes the reversible aldol condensation of dihydroxyacetone phosphate (DHAP or glycerone-phosphate) with glyceraldehyde 3-phosphate (G3P) to produce tagatose 1,6-bisphosphate (TBP). Requires GatZ subunit for full activity and stability. Is involved in the catabolism of galactitol.</text>
</comment>
<comment type="catalytic activity">
    <reaction evidence="1">
        <text>D-tagatofuranose 1,6-bisphosphate = D-glyceraldehyde 3-phosphate + dihydroxyacetone phosphate</text>
        <dbReference type="Rhea" id="RHEA:22948"/>
        <dbReference type="ChEBI" id="CHEBI:57642"/>
        <dbReference type="ChEBI" id="CHEBI:58694"/>
        <dbReference type="ChEBI" id="CHEBI:59776"/>
        <dbReference type="EC" id="4.1.2.40"/>
    </reaction>
</comment>
<comment type="cofactor">
    <cofactor evidence="1">
        <name>Zn(2+)</name>
        <dbReference type="ChEBI" id="CHEBI:29105"/>
    </cofactor>
    <text evidence="1">Binds 1 zinc ion per subunit.</text>
</comment>
<comment type="pathway">
    <text evidence="1">Carbohydrate metabolism; D-tagatose 6-phosphate degradation; D-glyceraldehyde 3-phosphate and glycerone phosphate from D-tagatose 6-phosphate: step 2/2.</text>
</comment>
<comment type="subunit">
    <text evidence="1">Forms a complex with GatZ.</text>
</comment>
<comment type="similarity">
    <text evidence="1">Belongs to the class II fructose-bisphosphate aldolase family. TagBP aldolase GatY subfamily.</text>
</comment>
<keyword id="KW-0298">Galactitol metabolism</keyword>
<keyword id="KW-0456">Lyase</keyword>
<keyword id="KW-0479">Metal-binding</keyword>
<keyword id="KW-0862">Zinc</keyword>
<feature type="chain" id="PRO_0000355339" description="D-tagatose-1,6-bisphosphate aldolase subunit GatY">
    <location>
        <begin position="1"/>
        <end position="284"/>
    </location>
</feature>
<feature type="active site" description="Proton donor" evidence="1">
    <location>
        <position position="82"/>
    </location>
</feature>
<feature type="binding site" evidence="1">
    <location>
        <position position="83"/>
    </location>
    <ligand>
        <name>Zn(2+)</name>
        <dbReference type="ChEBI" id="CHEBI:29105"/>
        <note>catalytic</note>
    </ligand>
</feature>
<feature type="binding site" evidence="1">
    <location>
        <position position="180"/>
    </location>
    <ligand>
        <name>Zn(2+)</name>
        <dbReference type="ChEBI" id="CHEBI:29105"/>
        <note>catalytic</note>
    </ligand>
</feature>
<feature type="binding site" evidence="1">
    <location>
        <position position="181"/>
    </location>
    <ligand>
        <name>dihydroxyacetone phosphate</name>
        <dbReference type="ChEBI" id="CHEBI:57642"/>
    </ligand>
</feature>
<feature type="binding site" evidence="1">
    <location>
        <position position="208"/>
    </location>
    <ligand>
        <name>Zn(2+)</name>
        <dbReference type="ChEBI" id="CHEBI:29105"/>
        <note>catalytic</note>
    </ligand>
</feature>
<feature type="binding site" evidence="1">
    <location>
        <begin position="209"/>
        <end position="211"/>
    </location>
    <ligand>
        <name>dihydroxyacetone phosphate</name>
        <dbReference type="ChEBI" id="CHEBI:57642"/>
    </ligand>
</feature>
<feature type="binding site" evidence="1">
    <location>
        <begin position="230"/>
        <end position="233"/>
    </location>
    <ligand>
        <name>dihydroxyacetone phosphate</name>
        <dbReference type="ChEBI" id="CHEBI:57642"/>
    </ligand>
</feature>
<gene>
    <name evidence="1" type="primary">gatY</name>
    <name type="ordered locus">EcolC_1551</name>
</gene>
<accession>B1IYY4</accession>
<name>GATY_ECOLC</name>